<evidence type="ECO:0000250" key="1"/>
<evidence type="ECO:0000250" key="2">
    <source>
        <dbReference type="UniProtKB" id="P18405"/>
    </source>
</evidence>
<evidence type="ECO:0000250" key="3">
    <source>
        <dbReference type="UniProtKB" id="P24008"/>
    </source>
</evidence>
<evidence type="ECO:0000255" key="4"/>
<evidence type="ECO:0000305" key="5"/>
<evidence type="ECO:0000312" key="6">
    <source>
        <dbReference type="MGI" id="MGI:98400"/>
    </source>
</evidence>
<protein>
    <recommendedName>
        <fullName evidence="5">3-oxo-5-alpha-steroid 4-dehydrogenase 1</fullName>
        <ecNumber evidence="2">1.3.1.22</ecNumber>
    </recommendedName>
    <alternativeName>
        <fullName>SR type 1</fullName>
    </alternativeName>
    <alternativeName>
        <fullName>Steroid 5-alpha-reductase 1</fullName>
        <shortName>S5AR 1</shortName>
    </alternativeName>
</protein>
<name>S5A1_MOUSE</name>
<sequence>MELDELCLLDALVYLEGFLAFVAFVGLQMVGSSYGRYSSQWSGRRVPARPAWFLQELPSMAWPLYECIRPAAARLGNLPNRVLLAMFLIHYVQRTLVFPVLIRGGKPTLLFTFVLAFLFCTLNGYLQSRYLSQFAVYAEDWVTHPCFLTGFALWLVGMVINIHSDHILRNLRKPGETGYKIPRGGLFEYVSSANYFGELVEWCGFALASWSLQGVVFALFTLCALFTRARQHHQWYLEKFEDYPKTRKILIPFLL</sequence>
<gene>
    <name evidence="6" type="primary">Srd5a1</name>
</gene>
<reference key="1">
    <citation type="journal article" date="2004" name="Genome Res.">
        <title>The status, quality, and expansion of the NIH full-length cDNA project: the Mammalian Gene Collection (MGC).</title>
        <authorList>
            <consortium name="The MGC Project Team"/>
        </authorList>
    </citation>
    <scope>NUCLEOTIDE SEQUENCE [LARGE SCALE MRNA]</scope>
    <source>
        <strain>C57BL/6J</strain>
        <strain>FVB/N</strain>
        <tissue>Brain</tissue>
        <tissue>Liver</tissue>
    </source>
</reference>
<organism>
    <name type="scientific">Mus musculus</name>
    <name type="common">Mouse</name>
    <dbReference type="NCBI Taxonomy" id="10090"/>
    <lineage>
        <taxon>Eukaryota</taxon>
        <taxon>Metazoa</taxon>
        <taxon>Chordata</taxon>
        <taxon>Craniata</taxon>
        <taxon>Vertebrata</taxon>
        <taxon>Euteleostomi</taxon>
        <taxon>Mammalia</taxon>
        <taxon>Eutheria</taxon>
        <taxon>Euarchontoglires</taxon>
        <taxon>Glires</taxon>
        <taxon>Rodentia</taxon>
        <taxon>Myomorpha</taxon>
        <taxon>Muroidea</taxon>
        <taxon>Muridae</taxon>
        <taxon>Murinae</taxon>
        <taxon>Mus</taxon>
        <taxon>Mus</taxon>
    </lineage>
</organism>
<proteinExistence type="evidence at transcript level"/>
<accession>Q68FF9</accession>
<accession>Q505K7</accession>
<keyword id="KW-0221">Differentiation</keyword>
<keyword id="KW-0256">Endoplasmic reticulum</keyword>
<keyword id="KW-0443">Lipid metabolism</keyword>
<keyword id="KW-0472">Membrane</keyword>
<keyword id="KW-0492">Microsome</keyword>
<keyword id="KW-0521">NADP</keyword>
<keyword id="KW-0560">Oxidoreductase</keyword>
<keyword id="KW-1185">Reference proteome</keyword>
<keyword id="KW-0726">Sexual differentiation</keyword>
<keyword id="KW-0812">Transmembrane</keyword>
<keyword id="KW-1133">Transmembrane helix</keyword>
<comment type="function">
    <text evidence="3">Converts testosterone into 5-alpha-dihydrotestosterone and progesterone or corticosterone into their corresponding 5-alpha-3-oxosteroids. It plays a central role in sexual differentiation and androgen physiology.</text>
</comment>
<comment type="catalytic activity">
    <reaction evidence="3">
        <text>a 3-oxo-5alpha-steroid + NADP(+) = a 3-oxo-Delta(4)-steroid + NADPH + H(+)</text>
        <dbReference type="Rhea" id="RHEA:54384"/>
        <dbReference type="ChEBI" id="CHEBI:13601"/>
        <dbReference type="ChEBI" id="CHEBI:15378"/>
        <dbReference type="ChEBI" id="CHEBI:47909"/>
        <dbReference type="ChEBI" id="CHEBI:57783"/>
        <dbReference type="ChEBI" id="CHEBI:58349"/>
        <dbReference type="EC" id="1.3.1.22"/>
    </reaction>
    <physiologicalReaction direction="right-to-left" evidence="3">
        <dbReference type="Rhea" id="RHEA:54386"/>
    </physiologicalReaction>
</comment>
<comment type="catalytic activity">
    <reaction evidence="3">
        <text>5alpha-pregnane-3,20-dione + NADP(+) = progesterone + NADPH + H(+)</text>
        <dbReference type="Rhea" id="RHEA:21952"/>
        <dbReference type="ChEBI" id="CHEBI:15378"/>
        <dbReference type="ChEBI" id="CHEBI:17026"/>
        <dbReference type="ChEBI" id="CHEBI:28952"/>
        <dbReference type="ChEBI" id="CHEBI:57783"/>
        <dbReference type="ChEBI" id="CHEBI:58349"/>
        <dbReference type="EC" id="1.3.1.22"/>
    </reaction>
    <physiologicalReaction direction="right-to-left" evidence="3">
        <dbReference type="Rhea" id="RHEA:21954"/>
    </physiologicalReaction>
</comment>
<comment type="catalytic activity">
    <reaction evidence="3">
        <text>17beta-hydroxy-5alpha-androstan-3-one + NADP(+) = testosterone + NADPH + H(+)</text>
        <dbReference type="Rhea" id="RHEA:50820"/>
        <dbReference type="ChEBI" id="CHEBI:15378"/>
        <dbReference type="ChEBI" id="CHEBI:16330"/>
        <dbReference type="ChEBI" id="CHEBI:17347"/>
        <dbReference type="ChEBI" id="CHEBI:57783"/>
        <dbReference type="ChEBI" id="CHEBI:58349"/>
        <dbReference type="EC" id="1.3.1.22"/>
    </reaction>
    <physiologicalReaction direction="right-to-left" evidence="3">
        <dbReference type="Rhea" id="RHEA:50822"/>
    </physiologicalReaction>
</comment>
<comment type="catalytic activity">
    <reaction evidence="3">
        <text>androst-4-ene-3,17-dione + NADPH + H(+) = 5alpha-androstan-3,17-dione + NADP(+)</text>
        <dbReference type="Rhea" id="RHEA:50816"/>
        <dbReference type="ChEBI" id="CHEBI:15378"/>
        <dbReference type="ChEBI" id="CHEBI:15994"/>
        <dbReference type="ChEBI" id="CHEBI:16422"/>
        <dbReference type="ChEBI" id="CHEBI:57783"/>
        <dbReference type="ChEBI" id="CHEBI:58349"/>
    </reaction>
    <physiologicalReaction direction="left-to-right" evidence="3">
        <dbReference type="Rhea" id="RHEA:50817"/>
    </physiologicalReaction>
</comment>
<comment type="subcellular location">
    <subcellularLocation>
        <location evidence="1">Microsome membrane</location>
        <topology evidence="1">Multi-pass membrane protein</topology>
    </subcellularLocation>
    <subcellularLocation>
        <location evidence="5">Endoplasmic reticulum membrane</location>
        <topology evidence="5">Multi-pass membrane protein</topology>
    </subcellularLocation>
</comment>
<comment type="similarity">
    <text evidence="5">Belongs to the steroid 5-alpha reductase family.</text>
</comment>
<feature type="chain" id="PRO_0000317711" description="3-oxo-5-alpha-steroid 4-dehydrogenase 1">
    <location>
        <begin position="1"/>
        <end position="255"/>
    </location>
</feature>
<feature type="transmembrane region" description="Helical" evidence="4">
    <location>
        <begin position="6"/>
        <end position="26"/>
    </location>
</feature>
<feature type="transmembrane region" description="Helical" evidence="4">
    <location>
        <begin position="82"/>
        <end position="102"/>
    </location>
</feature>
<feature type="transmembrane region" description="Helical" evidence="4">
    <location>
        <begin position="107"/>
        <end position="127"/>
    </location>
</feature>
<feature type="transmembrane region" description="Helical" evidence="4">
    <location>
        <begin position="142"/>
        <end position="162"/>
    </location>
</feature>
<feature type="transmembrane region" description="Helical" evidence="4">
    <location>
        <begin position="205"/>
        <end position="225"/>
    </location>
</feature>
<feature type="sequence conflict" description="In Ref. 1; AAH79863." evidence="5" ref="1">
    <original>C</original>
    <variation>R</variation>
    <location>
        <position position="7"/>
    </location>
</feature>
<feature type="sequence conflict" description="In Ref. 1; AAH94503." evidence="5" ref="1">
    <original>V</original>
    <variation>I</variation>
    <location>
        <position position="142"/>
    </location>
</feature>
<feature type="sequence conflict" description="In Ref. 1; AAH94503." evidence="5" ref="1">
    <original>E</original>
    <variation>D</variation>
    <location>
        <position position="176"/>
    </location>
</feature>
<dbReference type="EC" id="1.3.1.22" evidence="2"/>
<dbReference type="EMBL" id="BC079863">
    <property type="protein sequence ID" value="AAH79863.1"/>
    <property type="molecule type" value="mRNA"/>
</dbReference>
<dbReference type="EMBL" id="BC094503">
    <property type="protein sequence ID" value="AAH94503.1"/>
    <property type="molecule type" value="mRNA"/>
</dbReference>
<dbReference type="CCDS" id="CCDS26624.1"/>
<dbReference type="RefSeq" id="NP_780492.2">
    <property type="nucleotide sequence ID" value="NM_175283.3"/>
</dbReference>
<dbReference type="SMR" id="Q68FF9"/>
<dbReference type="FunCoup" id="Q68FF9">
    <property type="interactions" value="241"/>
</dbReference>
<dbReference type="STRING" id="10090.ENSMUSP00000089097"/>
<dbReference type="iPTMnet" id="Q68FF9"/>
<dbReference type="PhosphoSitePlus" id="Q68FF9"/>
<dbReference type="jPOST" id="Q68FF9"/>
<dbReference type="PaxDb" id="10090-ENSMUSP00000089097"/>
<dbReference type="ProteomicsDB" id="260801"/>
<dbReference type="DNASU" id="78925"/>
<dbReference type="GeneID" id="78925"/>
<dbReference type="KEGG" id="mmu:78925"/>
<dbReference type="UCSC" id="uc007rck.1">
    <property type="organism name" value="mouse"/>
</dbReference>
<dbReference type="AGR" id="MGI:98400"/>
<dbReference type="CTD" id="6715"/>
<dbReference type="MGI" id="MGI:98400">
    <property type="gene designation" value="Srd5a1"/>
</dbReference>
<dbReference type="eggNOG" id="KOG1638">
    <property type="taxonomic scope" value="Eukaryota"/>
</dbReference>
<dbReference type="InParanoid" id="Q68FF9"/>
<dbReference type="OrthoDB" id="5788137at2759"/>
<dbReference type="PhylomeDB" id="Q68FF9"/>
<dbReference type="TreeFam" id="TF314668"/>
<dbReference type="Reactome" id="R-MMU-193048">
    <property type="pathway name" value="Androgen biosynthesis"/>
</dbReference>
<dbReference type="BioGRID-ORCS" id="78925">
    <property type="hits" value="1 hit in 80 CRISPR screens"/>
</dbReference>
<dbReference type="ChiTaRS" id="Srd5a1">
    <property type="organism name" value="mouse"/>
</dbReference>
<dbReference type="PRO" id="PR:Q68FF9"/>
<dbReference type="Proteomes" id="UP000000589">
    <property type="component" value="Unplaced"/>
</dbReference>
<dbReference type="RNAct" id="Q68FF9">
    <property type="molecule type" value="protein"/>
</dbReference>
<dbReference type="GO" id="GO:0005783">
    <property type="term" value="C:endoplasmic reticulum"/>
    <property type="evidence" value="ECO:0000266"/>
    <property type="project" value="MGI"/>
</dbReference>
<dbReference type="GO" id="GO:0005789">
    <property type="term" value="C:endoplasmic reticulum membrane"/>
    <property type="evidence" value="ECO:0000266"/>
    <property type="project" value="MGI"/>
</dbReference>
<dbReference type="GO" id="GO:0047751">
    <property type="term" value="F:3-oxo-5-alpha-steroid 4-dehydrogenase (NADP+) activity"/>
    <property type="evidence" value="ECO:0007669"/>
    <property type="project" value="UniProtKB-EC"/>
</dbReference>
<dbReference type="GO" id="GO:0003865">
    <property type="term" value="F:3-oxo-5-alpha-steroid 4-dehydrogenase activity"/>
    <property type="evidence" value="ECO:0000315"/>
    <property type="project" value="MGI"/>
</dbReference>
<dbReference type="GO" id="GO:0006702">
    <property type="term" value="P:androgen biosynthetic process"/>
    <property type="evidence" value="ECO:0000315"/>
    <property type="project" value="MGI"/>
</dbReference>
<dbReference type="GO" id="GO:0030154">
    <property type="term" value="P:cell differentiation"/>
    <property type="evidence" value="ECO:0007669"/>
    <property type="project" value="UniProtKB-KW"/>
</dbReference>
<dbReference type="GO" id="GO:0007548">
    <property type="term" value="P:sex differentiation"/>
    <property type="evidence" value="ECO:0007669"/>
    <property type="project" value="UniProtKB-KW"/>
</dbReference>
<dbReference type="FunFam" id="1.20.120.1630:FF:000002">
    <property type="entry name" value="Steroid 5 alpha-reductase 1"/>
    <property type="match status" value="1"/>
</dbReference>
<dbReference type="Gene3D" id="1.20.120.1630">
    <property type="match status" value="1"/>
</dbReference>
<dbReference type="InterPro" id="IPR016636">
    <property type="entry name" value="3-oxo-5-alpha-steroid_4-DH"/>
</dbReference>
<dbReference type="InterPro" id="IPR001104">
    <property type="entry name" value="3-oxo-5_a-steroid_4-DH_C"/>
</dbReference>
<dbReference type="InterPro" id="IPR039357">
    <property type="entry name" value="SRD5A/TECR"/>
</dbReference>
<dbReference type="PANTHER" id="PTHR10556">
    <property type="entry name" value="3-OXO-5-ALPHA-STEROID 4-DEHYDROGENASE"/>
    <property type="match status" value="1"/>
</dbReference>
<dbReference type="PANTHER" id="PTHR10556:SF57">
    <property type="entry name" value="3-OXO-5-ALPHA-STEROID 4-DEHYDROGENASE 1"/>
    <property type="match status" value="1"/>
</dbReference>
<dbReference type="Pfam" id="PF02544">
    <property type="entry name" value="Steroid_dh"/>
    <property type="match status" value="1"/>
</dbReference>
<dbReference type="PIRSF" id="PIRSF015596">
    <property type="entry name" value="5_alpha-SR2"/>
    <property type="match status" value="1"/>
</dbReference>
<dbReference type="PROSITE" id="PS50244">
    <property type="entry name" value="S5A_REDUCTASE"/>
    <property type="match status" value="1"/>
</dbReference>